<proteinExistence type="inferred from homology"/>
<organism>
    <name type="scientific">Photorhabdus laumondii subsp. laumondii (strain DSM 15139 / CIP 105565 / TT01)</name>
    <name type="common">Photorhabdus luminescens subsp. laumondii</name>
    <dbReference type="NCBI Taxonomy" id="243265"/>
    <lineage>
        <taxon>Bacteria</taxon>
        <taxon>Pseudomonadati</taxon>
        <taxon>Pseudomonadota</taxon>
        <taxon>Gammaproteobacteria</taxon>
        <taxon>Enterobacterales</taxon>
        <taxon>Morganellaceae</taxon>
        <taxon>Photorhabdus</taxon>
    </lineage>
</organism>
<sequence>MKRPDYRTLQALDAVIRERGFERAAQKLCITQSAVSQRIKQLENLFGQPLLVRTVPPRPTEQGQKLLALLHQVELLEEQWLGNEQGTDTPLLLSLAVNADSLATWLLPALHPVLADLPIRLNIQVEDETRTQEQLRRGEVVGAVSIQPQPLPSCLIDKLGALDYLFVASPEFATRHFPNGVTRSALLKAPAVAFDHLDDMHQAFLQQNFELSPGSVPCHIVNSSEAFVQLAKQGSTCCMIPHLQIDQELKNGELIDLTPGLCQRRMLYWHRFAPESRTMKKVTDALLKLGRQMLRQDDIN</sequence>
<evidence type="ECO:0000255" key="1">
    <source>
        <dbReference type="HAMAP-Rule" id="MF_00513"/>
    </source>
</evidence>
<evidence type="ECO:0000305" key="2"/>
<keyword id="KW-0238">DNA-binding</keyword>
<keyword id="KW-1185">Reference proteome</keyword>
<keyword id="KW-0804">Transcription</keyword>
<keyword id="KW-0805">Transcription regulation</keyword>
<feature type="chain" id="PRO_0000258609" description="HTH-type transcriptional regulator ArgP">
    <location>
        <begin position="1"/>
        <end position="300"/>
    </location>
</feature>
<feature type="domain" description="HTH lysR-type" evidence="1">
    <location>
        <begin position="4"/>
        <end position="60"/>
    </location>
</feature>
<feature type="DNA-binding region" description="H-T-H motif" evidence="1">
    <location>
        <begin position="21"/>
        <end position="40"/>
    </location>
</feature>
<gene>
    <name evidence="1" type="primary">argP</name>
    <name type="synonym">iciA</name>
    <name type="ordered locus">plu3610</name>
</gene>
<dbReference type="EMBL" id="BX571871">
    <property type="protein sequence ID" value="CAE15983.1"/>
    <property type="molecule type" value="Genomic_DNA"/>
</dbReference>
<dbReference type="RefSeq" id="WP_011147777.1">
    <property type="nucleotide sequence ID" value="NC_005126.1"/>
</dbReference>
<dbReference type="SMR" id="Q7N185"/>
<dbReference type="STRING" id="243265.plu3610"/>
<dbReference type="GeneID" id="48849855"/>
<dbReference type="KEGG" id="plu:plu3610"/>
<dbReference type="eggNOG" id="COG0583">
    <property type="taxonomic scope" value="Bacteria"/>
</dbReference>
<dbReference type="HOGENOM" id="CLU_063829_0_0_6"/>
<dbReference type="OrthoDB" id="3252676at2"/>
<dbReference type="Proteomes" id="UP000002514">
    <property type="component" value="Chromosome"/>
</dbReference>
<dbReference type="GO" id="GO:0003677">
    <property type="term" value="F:DNA binding"/>
    <property type="evidence" value="ECO:0007669"/>
    <property type="project" value="UniProtKB-UniRule"/>
</dbReference>
<dbReference type="GO" id="GO:0003700">
    <property type="term" value="F:DNA-binding transcription factor activity"/>
    <property type="evidence" value="ECO:0007669"/>
    <property type="project" value="UniProtKB-UniRule"/>
</dbReference>
<dbReference type="CDD" id="cd08428">
    <property type="entry name" value="PBP2_IciA_ArgP"/>
    <property type="match status" value="1"/>
</dbReference>
<dbReference type="FunFam" id="1.10.10.10:FF:000061">
    <property type="entry name" value="HTH-type transcriptional regulator ArgP"/>
    <property type="match status" value="1"/>
</dbReference>
<dbReference type="Gene3D" id="3.40.190.290">
    <property type="match status" value="1"/>
</dbReference>
<dbReference type="Gene3D" id="1.10.10.10">
    <property type="entry name" value="Winged helix-like DNA-binding domain superfamily/Winged helix DNA-binding domain"/>
    <property type="match status" value="1"/>
</dbReference>
<dbReference type="HAMAP" id="MF_00513">
    <property type="entry name" value="HTH_type_ArgP"/>
    <property type="match status" value="1"/>
</dbReference>
<dbReference type="InterPro" id="IPR017685">
    <property type="entry name" value="ArgP"/>
</dbReference>
<dbReference type="InterPro" id="IPR023490">
    <property type="entry name" value="ArgP_gammaproteobact"/>
</dbReference>
<dbReference type="InterPro" id="IPR050176">
    <property type="entry name" value="LTTR"/>
</dbReference>
<dbReference type="InterPro" id="IPR005119">
    <property type="entry name" value="LysR_subst-bd"/>
</dbReference>
<dbReference type="InterPro" id="IPR000847">
    <property type="entry name" value="Tscrpt_reg_HTH_LysR"/>
</dbReference>
<dbReference type="InterPro" id="IPR036388">
    <property type="entry name" value="WH-like_DNA-bd_sf"/>
</dbReference>
<dbReference type="InterPro" id="IPR036390">
    <property type="entry name" value="WH_DNA-bd_sf"/>
</dbReference>
<dbReference type="NCBIfam" id="TIGR03298">
    <property type="entry name" value="argP"/>
    <property type="match status" value="1"/>
</dbReference>
<dbReference type="NCBIfam" id="NF002964">
    <property type="entry name" value="PRK03635.1"/>
    <property type="match status" value="1"/>
</dbReference>
<dbReference type="NCBIfam" id="NF009888">
    <property type="entry name" value="PRK13348.1"/>
    <property type="match status" value="1"/>
</dbReference>
<dbReference type="PANTHER" id="PTHR30579:SF2">
    <property type="entry name" value="HTH-TYPE TRANSCRIPTIONAL REGULATOR ARGP"/>
    <property type="match status" value="1"/>
</dbReference>
<dbReference type="PANTHER" id="PTHR30579">
    <property type="entry name" value="TRANSCRIPTIONAL REGULATOR"/>
    <property type="match status" value="1"/>
</dbReference>
<dbReference type="Pfam" id="PF00126">
    <property type="entry name" value="HTH_1"/>
    <property type="match status" value="1"/>
</dbReference>
<dbReference type="Pfam" id="PF03466">
    <property type="entry name" value="LysR_substrate"/>
    <property type="match status" value="1"/>
</dbReference>
<dbReference type="PRINTS" id="PR00039">
    <property type="entry name" value="HTHLYSR"/>
</dbReference>
<dbReference type="SUPFAM" id="SSF53850">
    <property type="entry name" value="Periplasmic binding protein-like II"/>
    <property type="match status" value="1"/>
</dbReference>
<dbReference type="SUPFAM" id="SSF46785">
    <property type="entry name" value="Winged helix' DNA-binding domain"/>
    <property type="match status" value="1"/>
</dbReference>
<dbReference type="PROSITE" id="PS50931">
    <property type="entry name" value="HTH_LYSR"/>
    <property type="match status" value="1"/>
</dbReference>
<comment type="function">
    <text evidence="1">Controls the transcription of genes involved in arginine and lysine metabolism.</text>
</comment>
<comment type="subunit">
    <text evidence="1">Homodimer.</text>
</comment>
<comment type="similarity">
    <text evidence="2">Belongs to the LysR transcriptional regulatory family.</text>
</comment>
<reference key="1">
    <citation type="journal article" date="2003" name="Nat. Biotechnol.">
        <title>The genome sequence of the entomopathogenic bacterium Photorhabdus luminescens.</title>
        <authorList>
            <person name="Duchaud E."/>
            <person name="Rusniok C."/>
            <person name="Frangeul L."/>
            <person name="Buchrieser C."/>
            <person name="Givaudan A."/>
            <person name="Taourit S."/>
            <person name="Bocs S."/>
            <person name="Boursaux-Eude C."/>
            <person name="Chandler M."/>
            <person name="Charles J.-F."/>
            <person name="Dassa E."/>
            <person name="Derose R."/>
            <person name="Derzelle S."/>
            <person name="Freyssinet G."/>
            <person name="Gaudriault S."/>
            <person name="Medigue C."/>
            <person name="Lanois A."/>
            <person name="Powell K."/>
            <person name="Siguier P."/>
            <person name="Vincent R."/>
            <person name="Wingate V."/>
            <person name="Zouine M."/>
            <person name="Glaser P."/>
            <person name="Boemare N."/>
            <person name="Danchin A."/>
            <person name="Kunst F."/>
        </authorList>
    </citation>
    <scope>NUCLEOTIDE SEQUENCE [LARGE SCALE GENOMIC DNA]</scope>
    <source>
        <strain>DSM 15139 / CIP 105565 / TT01</strain>
    </source>
</reference>
<accession>Q7N185</accession>
<name>ARGP_PHOLL</name>
<protein>
    <recommendedName>
        <fullName evidence="1">HTH-type transcriptional regulator ArgP</fullName>
    </recommendedName>
</protein>